<protein>
    <recommendedName>
        <fullName>Hydrolase in agr operon</fullName>
    </recommendedName>
    <alternativeName>
        <fullName>ORF 5</fullName>
    </alternativeName>
</protein>
<reference key="1">
    <citation type="journal article" date="1993" name="FEMS Microbiol. Lett.">
        <title>Agr-related sequences in Staphylococcus lugdunensis.</title>
        <authorList>
            <person name="Vandenesch F."/>
            <person name="Projan S.J."/>
            <person name="Kreiswirth B."/>
            <person name="Etienne J."/>
            <person name="Novick R.P."/>
        </authorList>
    </citation>
    <scope>NUCLEOTIDE SEQUENCE [GENOMIC DNA]</scope>
</reference>
<proteinExistence type="inferred from homology"/>
<feature type="chain" id="PRO_0000213265" description="Hydrolase in agr operon">
    <location>
        <begin position="1" status="less than"/>
        <end position="234"/>
    </location>
</feature>
<feature type="domain" description="CN hydrolase" evidence="1">
    <location>
        <begin position="1" status="less than"/>
        <end position="212"/>
    </location>
</feature>
<feature type="active site" description="Proton acceptor" evidence="1">
    <location>
        <position position="14"/>
    </location>
</feature>
<feature type="active site" description="Proton donor" evidence="1">
    <location>
        <position position="83"/>
    </location>
</feature>
<feature type="active site" description="Nucleophile" evidence="1">
    <location>
        <position position="119"/>
    </location>
</feature>
<feature type="non-terminal residue">
    <location>
        <position position="1"/>
    </location>
</feature>
<dbReference type="EMBL" id="L13334">
    <property type="protein sequence ID" value="AAA71975.1"/>
    <property type="molecule type" value="Unassigned_DNA"/>
</dbReference>
<dbReference type="SMR" id="P55178"/>
<dbReference type="STRING" id="28035.B6N84_04660"/>
<dbReference type="eggNOG" id="COG0388">
    <property type="taxonomic scope" value="Bacteria"/>
</dbReference>
<dbReference type="CDD" id="cd07583">
    <property type="entry name" value="nitrilase_5"/>
    <property type="match status" value="1"/>
</dbReference>
<dbReference type="Gene3D" id="3.60.110.10">
    <property type="entry name" value="Carbon-nitrogen hydrolase"/>
    <property type="match status" value="1"/>
</dbReference>
<dbReference type="InterPro" id="IPR003010">
    <property type="entry name" value="C-N_Hydrolase"/>
</dbReference>
<dbReference type="InterPro" id="IPR036526">
    <property type="entry name" value="C-N_Hydrolase_sf"/>
</dbReference>
<dbReference type="InterPro" id="IPR001110">
    <property type="entry name" value="UPF0012_CS"/>
</dbReference>
<dbReference type="PANTHER" id="PTHR23088:SF27">
    <property type="entry name" value="DEAMINATED GLUTATHIONE AMIDASE"/>
    <property type="match status" value="1"/>
</dbReference>
<dbReference type="PANTHER" id="PTHR23088">
    <property type="entry name" value="NITRILASE-RELATED"/>
    <property type="match status" value="1"/>
</dbReference>
<dbReference type="Pfam" id="PF00795">
    <property type="entry name" value="CN_hydrolase"/>
    <property type="match status" value="1"/>
</dbReference>
<dbReference type="SUPFAM" id="SSF56317">
    <property type="entry name" value="Carbon-nitrogen hydrolase"/>
    <property type="match status" value="1"/>
</dbReference>
<dbReference type="PROSITE" id="PS50263">
    <property type="entry name" value="CN_HYDROLASE"/>
    <property type="match status" value="1"/>
</dbReference>
<dbReference type="PROSITE" id="PS01227">
    <property type="entry name" value="UPF0012"/>
    <property type="match status" value="1"/>
</dbReference>
<evidence type="ECO:0000255" key="1">
    <source>
        <dbReference type="PROSITE-ProRule" id="PRU00054"/>
    </source>
</evidence>
<evidence type="ECO:0000305" key="2"/>
<name>YAG5_STALU</name>
<sequence length="234" mass="26495">ILYNKDTDVVILPEMWNNGYALEQLEEKADFDLERSTDFIKNLALQYQVDIIAGSVSNKHHDHIFNTAFAIDKTGKVINQYDKMHLVPMLDEPAFLTAGKNVPETFKLSNGVKVTQMICYDLRFPELLRYPARSGATIAFYVAQWPSARLNHWQVLLKARAIENNMYVIGCNGCGYDGKTQYAGHSVAINPNGEIIQELSTTEKELTVTIDIDAVEQQRKAIPVFDSLVPHLYK</sequence>
<comment type="similarity">
    <text evidence="2">Belongs to the carbon-nitrogen hydrolase superfamily. NIT1/NIT2 family.</text>
</comment>
<organism>
    <name type="scientific">Staphylococcus lugdunensis</name>
    <dbReference type="NCBI Taxonomy" id="28035"/>
    <lineage>
        <taxon>Bacteria</taxon>
        <taxon>Bacillati</taxon>
        <taxon>Bacillota</taxon>
        <taxon>Bacilli</taxon>
        <taxon>Bacillales</taxon>
        <taxon>Staphylococcaceae</taxon>
        <taxon>Staphylococcus</taxon>
    </lineage>
</organism>
<accession>P55178</accession>